<organism>
    <name type="scientific">Homo sapiens</name>
    <name type="common">Human</name>
    <dbReference type="NCBI Taxonomy" id="9606"/>
    <lineage>
        <taxon>Eukaryota</taxon>
        <taxon>Metazoa</taxon>
        <taxon>Chordata</taxon>
        <taxon>Craniata</taxon>
        <taxon>Vertebrata</taxon>
        <taxon>Euteleostomi</taxon>
        <taxon>Mammalia</taxon>
        <taxon>Eutheria</taxon>
        <taxon>Euarchontoglires</taxon>
        <taxon>Primates</taxon>
        <taxon>Haplorrhini</taxon>
        <taxon>Catarrhini</taxon>
        <taxon>Hominidae</taxon>
        <taxon>Homo</taxon>
    </lineage>
</organism>
<reference key="1">
    <citation type="journal article" date="2004" name="Nat. Genet.">
        <title>Complete sequencing and characterization of 21,243 full-length human cDNAs.</title>
        <authorList>
            <person name="Ota T."/>
            <person name="Suzuki Y."/>
            <person name="Nishikawa T."/>
            <person name="Otsuki T."/>
            <person name="Sugiyama T."/>
            <person name="Irie R."/>
            <person name="Wakamatsu A."/>
            <person name="Hayashi K."/>
            <person name="Sato H."/>
            <person name="Nagai K."/>
            <person name="Kimura K."/>
            <person name="Makita H."/>
            <person name="Sekine M."/>
            <person name="Obayashi M."/>
            <person name="Nishi T."/>
            <person name="Shibahara T."/>
            <person name="Tanaka T."/>
            <person name="Ishii S."/>
            <person name="Yamamoto J."/>
            <person name="Saito K."/>
            <person name="Kawai Y."/>
            <person name="Isono Y."/>
            <person name="Nakamura Y."/>
            <person name="Nagahari K."/>
            <person name="Murakami K."/>
            <person name="Yasuda T."/>
            <person name="Iwayanagi T."/>
            <person name="Wagatsuma M."/>
            <person name="Shiratori A."/>
            <person name="Sudo H."/>
            <person name="Hosoiri T."/>
            <person name="Kaku Y."/>
            <person name="Kodaira H."/>
            <person name="Kondo H."/>
            <person name="Sugawara M."/>
            <person name="Takahashi M."/>
            <person name="Kanda K."/>
            <person name="Yokoi T."/>
            <person name="Furuya T."/>
            <person name="Kikkawa E."/>
            <person name="Omura Y."/>
            <person name="Abe K."/>
            <person name="Kamihara K."/>
            <person name="Katsuta N."/>
            <person name="Sato K."/>
            <person name="Tanikawa M."/>
            <person name="Yamazaki M."/>
            <person name="Ninomiya K."/>
            <person name="Ishibashi T."/>
            <person name="Yamashita H."/>
            <person name="Murakawa K."/>
            <person name="Fujimori K."/>
            <person name="Tanai H."/>
            <person name="Kimata M."/>
            <person name="Watanabe M."/>
            <person name="Hiraoka S."/>
            <person name="Chiba Y."/>
            <person name="Ishida S."/>
            <person name="Ono Y."/>
            <person name="Takiguchi S."/>
            <person name="Watanabe S."/>
            <person name="Yosida M."/>
            <person name="Hotuta T."/>
            <person name="Kusano J."/>
            <person name="Kanehori K."/>
            <person name="Takahashi-Fujii A."/>
            <person name="Hara H."/>
            <person name="Tanase T.-O."/>
            <person name="Nomura Y."/>
            <person name="Togiya S."/>
            <person name="Komai F."/>
            <person name="Hara R."/>
            <person name="Takeuchi K."/>
            <person name="Arita M."/>
            <person name="Imose N."/>
            <person name="Musashino K."/>
            <person name="Yuuki H."/>
            <person name="Oshima A."/>
            <person name="Sasaki N."/>
            <person name="Aotsuka S."/>
            <person name="Yoshikawa Y."/>
            <person name="Matsunawa H."/>
            <person name="Ichihara T."/>
            <person name="Shiohata N."/>
            <person name="Sano S."/>
            <person name="Moriya S."/>
            <person name="Momiyama H."/>
            <person name="Satoh N."/>
            <person name="Takami S."/>
            <person name="Terashima Y."/>
            <person name="Suzuki O."/>
            <person name="Nakagawa S."/>
            <person name="Senoh A."/>
            <person name="Mizoguchi H."/>
            <person name="Goto Y."/>
            <person name="Shimizu F."/>
            <person name="Wakebe H."/>
            <person name="Hishigaki H."/>
            <person name="Watanabe T."/>
            <person name="Sugiyama A."/>
            <person name="Takemoto M."/>
            <person name="Kawakami B."/>
            <person name="Yamazaki M."/>
            <person name="Watanabe K."/>
            <person name="Kumagai A."/>
            <person name="Itakura S."/>
            <person name="Fukuzumi Y."/>
            <person name="Fujimori Y."/>
            <person name="Komiyama M."/>
            <person name="Tashiro H."/>
            <person name="Tanigami A."/>
            <person name="Fujiwara T."/>
            <person name="Ono T."/>
            <person name="Yamada K."/>
            <person name="Fujii Y."/>
            <person name="Ozaki K."/>
            <person name="Hirao M."/>
            <person name="Ohmori Y."/>
            <person name="Kawabata A."/>
            <person name="Hikiji T."/>
            <person name="Kobatake N."/>
            <person name="Inagaki H."/>
            <person name="Ikema Y."/>
            <person name="Okamoto S."/>
            <person name="Okitani R."/>
            <person name="Kawakami T."/>
            <person name="Noguchi S."/>
            <person name="Itoh T."/>
            <person name="Shigeta K."/>
            <person name="Senba T."/>
            <person name="Matsumura K."/>
            <person name="Nakajima Y."/>
            <person name="Mizuno T."/>
            <person name="Morinaga M."/>
            <person name="Sasaki M."/>
            <person name="Togashi T."/>
            <person name="Oyama M."/>
            <person name="Hata H."/>
            <person name="Watanabe M."/>
            <person name="Komatsu T."/>
            <person name="Mizushima-Sugano J."/>
            <person name="Satoh T."/>
            <person name="Shirai Y."/>
            <person name="Takahashi Y."/>
            <person name="Nakagawa K."/>
            <person name="Okumura K."/>
            <person name="Nagase T."/>
            <person name="Nomura N."/>
            <person name="Kikuchi H."/>
            <person name="Masuho Y."/>
            <person name="Yamashita R."/>
            <person name="Nakai K."/>
            <person name="Yada T."/>
            <person name="Nakamura Y."/>
            <person name="Ohara O."/>
            <person name="Isogai T."/>
            <person name="Sugano S."/>
        </authorList>
    </citation>
    <scope>NUCLEOTIDE SEQUENCE [LARGE SCALE MRNA]</scope>
    <source>
        <tissue>Tongue</tissue>
    </source>
</reference>
<reference key="2">
    <citation type="journal article" date="2006" name="Nature">
        <title>The DNA sequence, annotation and analysis of human chromosome 3.</title>
        <authorList>
            <person name="Muzny D.M."/>
            <person name="Scherer S.E."/>
            <person name="Kaul R."/>
            <person name="Wang J."/>
            <person name="Yu J."/>
            <person name="Sudbrak R."/>
            <person name="Buhay C.J."/>
            <person name="Chen R."/>
            <person name="Cree A."/>
            <person name="Ding Y."/>
            <person name="Dugan-Rocha S."/>
            <person name="Gill R."/>
            <person name="Gunaratne P."/>
            <person name="Harris R.A."/>
            <person name="Hawes A.C."/>
            <person name="Hernandez J."/>
            <person name="Hodgson A.V."/>
            <person name="Hume J."/>
            <person name="Jackson A."/>
            <person name="Khan Z.M."/>
            <person name="Kovar-Smith C."/>
            <person name="Lewis L.R."/>
            <person name="Lozado R.J."/>
            <person name="Metzker M.L."/>
            <person name="Milosavljevic A."/>
            <person name="Miner G.R."/>
            <person name="Morgan M.B."/>
            <person name="Nazareth L.V."/>
            <person name="Scott G."/>
            <person name="Sodergren E."/>
            <person name="Song X.-Z."/>
            <person name="Steffen D."/>
            <person name="Wei S."/>
            <person name="Wheeler D.A."/>
            <person name="Wright M.W."/>
            <person name="Worley K.C."/>
            <person name="Yuan Y."/>
            <person name="Zhang Z."/>
            <person name="Adams C.Q."/>
            <person name="Ansari-Lari M.A."/>
            <person name="Ayele M."/>
            <person name="Brown M.J."/>
            <person name="Chen G."/>
            <person name="Chen Z."/>
            <person name="Clendenning J."/>
            <person name="Clerc-Blankenburg K.P."/>
            <person name="Chen R."/>
            <person name="Chen Z."/>
            <person name="Davis C."/>
            <person name="Delgado O."/>
            <person name="Dinh H.H."/>
            <person name="Dong W."/>
            <person name="Draper H."/>
            <person name="Ernst S."/>
            <person name="Fu G."/>
            <person name="Gonzalez-Garay M.L."/>
            <person name="Garcia D.K."/>
            <person name="Gillett W."/>
            <person name="Gu J."/>
            <person name="Hao B."/>
            <person name="Haugen E."/>
            <person name="Havlak P."/>
            <person name="He X."/>
            <person name="Hennig S."/>
            <person name="Hu S."/>
            <person name="Huang W."/>
            <person name="Jackson L.R."/>
            <person name="Jacob L.S."/>
            <person name="Kelly S.H."/>
            <person name="Kube M."/>
            <person name="Levy R."/>
            <person name="Li Z."/>
            <person name="Liu B."/>
            <person name="Liu J."/>
            <person name="Liu W."/>
            <person name="Lu J."/>
            <person name="Maheshwari M."/>
            <person name="Nguyen B.-V."/>
            <person name="Okwuonu G.O."/>
            <person name="Palmeiri A."/>
            <person name="Pasternak S."/>
            <person name="Perez L.M."/>
            <person name="Phelps K.A."/>
            <person name="Plopper F.J."/>
            <person name="Qiang B."/>
            <person name="Raymond C."/>
            <person name="Rodriguez R."/>
            <person name="Saenphimmachak C."/>
            <person name="Santibanez J."/>
            <person name="Shen H."/>
            <person name="Shen Y."/>
            <person name="Subramanian S."/>
            <person name="Tabor P.E."/>
            <person name="Verduzco D."/>
            <person name="Waldron L."/>
            <person name="Wang J."/>
            <person name="Wang J."/>
            <person name="Wang Q."/>
            <person name="Williams G.A."/>
            <person name="Wong G.K.-S."/>
            <person name="Yao Z."/>
            <person name="Zhang J."/>
            <person name="Zhang X."/>
            <person name="Zhao G."/>
            <person name="Zhou J."/>
            <person name="Zhou Y."/>
            <person name="Nelson D."/>
            <person name="Lehrach H."/>
            <person name="Reinhardt R."/>
            <person name="Naylor S.L."/>
            <person name="Yang H."/>
            <person name="Olson M."/>
            <person name="Weinstock G."/>
            <person name="Gibbs R.A."/>
        </authorList>
    </citation>
    <scope>NUCLEOTIDE SEQUENCE [LARGE SCALE GENOMIC DNA]</scope>
</reference>
<reference key="3">
    <citation type="journal article" date="2013" name="J. Proteome Res.">
        <title>Toward a comprehensive characterization of a human cancer cell phosphoproteome.</title>
        <authorList>
            <person name="Zhou H."/>
            <person name="Di Palma S."/>
            <person name="Preisinger C."/>
            <person name="Peng M."/>
            <person name="Polat A.N."/>
            <person name="Heck A.J."/>
            <person name="Mohammed S."/>
        </authorList>
    </citation>
    <scope>PHOSPHORYLATION [LARGE SCALE ANALYSIS] AT SER-145</scope>
    <scope>IDENTIFICATION BY MASS SPECTROMETRY [LARGE SCALE ANALYSIS]</scope>
    <source>
        <tissue>Erythroleukemia</tissue>
    </source>
</reference>
<gene>
    <name type="primary">ZNF852</name>
</gene>
<sequence>MVRPQDTVAYEDLSEDYTQKKWKGLALSQRALHWNMMLENDRSMASLGRNMMESSELTPKQEIFKGSESSNSTSGGLFGVVPGGTETGDVCEDTFKELEGQPSNEEGSRLESDFLEIIDEDKKKSTKDRYEEYKEVEEHPPLSSSPVEHEGVLKGQKSYRCDECGKAFYWSSHLIGHRRIHTGEKPYECNECGKTFRQTSQLIVHLRTHTGEKPYECSECGKAYRHSSHLIQHQRLHNGEKPYKCNECAKAFNQSSKLFDHQRTHTGEKPYECKECGAAFSRSKNLVRHQFLHTGKKPYKCNECGRAFCSNRNLIDHQRTHTGEKPYKCNECGKAFSRSKCLIRHQSLHTGEKPYKCSECGKAFNQISQLVEHERIHTGEKPFKCSECGKAFGLSKCLIRHQRLHTSEKPYKCNECGKSFNQNSYLIIHQRIHTGEKPYECNECGKVFSYNSSLMVHQRTHTGEKPYKCNSCGKAFSDSSQLTVHQRVHTGEKNLMNVLSVGKPLVSVPLLITTSELMLERSPQVWLGHLLKAWFSETDSKDL</sequence>
<dbReference type="EMBL" id="AK296954">
    <property type="protein sequence ID" value="BAG59499.1"/>
    <property type="status" value="ALT_FRAME"/>
    <property type="molecule type" value="mRNA"/>
</dbReference>
<dbReference type="EMBL" id="AC099669">
    <property type="status" value="NOT_ANNOTATED_CDS"/>
    <property type="molecule type" value="Genomic_DNA"/>
</dbReference>
<dbReference type="RefSeq" id="NP_001274278.1">
    <property type="nucleotide sequence ID" value="NM_001287349.1"/>
</dbReference>
<dbReference type="RefSeq" id="NP_001410398.1">
    <property type="nucleotide sequence ID" value="NM_001423469.1"/>
</dbReference>
<dbReference type="SMR" id="Q6ZMS4"/>
<dbReference type="BioGRID" id="130087">
    <property type="interactions" value="10"/>
</dbReference>
<dbReference type="FunCoup" id="Q6ZMS4">
    <property type="interactions" value="95"/>
</dbReference>
<dbReference type="IntAct" id="Q6ZMS4">
    <property type="interactions" value="8"/>
</dbReference>
<dbReference type="STRING" id="9606.ENSP00000389841"/>
<dbReference type="iPTMnet" id="Q6ZMS4"/>
<dbReference type="PhosphoSitePlus" id="Q6ZMS4"/>
<dbReference type="BioMuta" id="ZNF852"/>
<dbReference type="DMDM" id="298286894"/>
<dbReference type="jPOST" id="Q6ZMS4"/>
<dbReference type="MassIVE" id="Q6ZMS4"/>
<dbReference type="PaxDb" id="9606-ENSP00000389841"/>
<dbReference type="PeptideAtlas" id="Q6ZMS4"/>
<dbReference type="ProteomicsDB" id="67908"/>
<dbReference type="Pumba" id="Q6ZMS4"/>
<dbReference type="Antibodypedia" id="62713">
    <property type="antibodies" value="23 antibodies from 5 providers"/>
</dbReference>
<dbReference type="DNASU" id="285346"/>
<dbReference type="Ensembl" id="ENST00000436261.7">
    <property type="protein sequence ID" value="ENSP00000389841.2"/>
    <property type="gene ID" value="ENSG00000178917.19"/>
</dbReference>
<dbReference type="GeneID" id="285346"/>
<dbReference type="KEGG" id="hsa:285346"/>
<dbReference type="UCSC" id="uc062iux.1">
    <property type="organism name" value="human"/>
</dbReference>
<dbReference type="AGR" id="HGNC:27713"/>
<dbReference type="CTD" id="285346"/>
<dbReference type="DisGeNET" id="285346"/>
<dbReference type="GeneCards" id="ZNF852"/>
<dbReference type="HGNC" id="HGNC:27713">
    <property type="gene designation" value="ZNF852"/>
</dbReference>
<dbReference type="HPA" id="ENSG00000178917">
    <property type="expression patterns" value="Low tissue specificity"/>
</dbReference>
<dbReference type="neXtProt" id="NX_Q6ZMS4"/>
<dbReference type="VEuPathDB" id="HostDB:ENSG00000178917"/>
<dbReference type="eggNOG" id="KOG1721">
    <property type="taxonomic scope" value="Eukaryota"/>
</dbReference>
<dbReference type="HOGENOM" id="CLU_002678_44_5_1"/>
<dbReference type="InParanoid" id="Q6ZMS4"/>
<dbReference type="OMA" id="HHLKAWF"/>
<dbReference type="OrthoDB" id="9411774at2759"/>
<dbReference type="PAN-GO" id="Q6ZMS4">
    <property type="GO annotations" value="4 GO annotations based on evolutionary models"/>
</dbReference>
<dbReference type="PhylomeDB" id="Q6ZMS4"/>
<dbReference type="TreeFam" id="TF350837"/>
<dbReference type="PathwayCommons" id="Q6ZMS4"/>
<dbReference type="SignaLink" id="Q6ZMS4"/>
<dbReference type="BioGRID-ORCS" id="285346">
    <property type="hits" value="5 hits in 326 CRISPR screens"/>
</dbReference>
<dbReference type="GenomeRNAi" id="285346"/>
<dbReference type="Pharos" id="Q6ZMS4">
    <property type="development level" value="Tdark"/>
</dbReference>
<dbReference type="PRO" id="PR:Q6ZMS4"/>
<dbReference type="Proteomes" id="UP000005640">
    <property type="component" value="Chromosome 3"/>
</dbReference>
<dbReference type="RNAct" id="Q6ZMS4">
    <property type="molecule type" value="protein"/>
</dbReference>
<dbReference type="Bgee" id="ENSG00000178917">
    <property type="expression patterns" value="Expressed in male germ line stem cell (sensu Vertebrata) in testis and 110 other cell types or tissues"/>
</dbReference>
<dbReference type="ExpressionAtlas" id="Q6ZMS4">
    <property type="expression patterns" value="baseline and differential"/>
</dbReference>
<dbReference type="GO" id="GO:0005634">
    <property type="term" value="C:nucleus"/>
    <property type="evidence" value="ECO:0000318"/>
    <property type="project" value="GO_Central"/>
</dbReference>
<dbReference type="GO" id="GO:0000981">
    <property type="term" value="F:DNA-binding transcription factor activity, RNA polymerase II-specific"/>
    <property type="evidence" value="ECO:0000318"/>
    <property type="project" value="GO_Central"/>
</dbReference>
<dbReference type="GO" id="GO:0000978">
    <property type="term" value="F:RNA polymerase II cis-regulatory region sequence-specific DNA binding"/>
    <property type="evidence" value="ECO:0000318"/>
    <property type="project" value="GO_Central"/>
</dbReference>
<dbReference type="GO" id="GO:0008270">
    <property type="term" value="F:zinc ion binding"/>
    <property type="evidence" value="ECO:0007669"/>
    <property type="project" value="UniProtKB-KW"/>
</dbReference>
<dbReference type="GO" id="GO:0006357">
    <property type="term" value="P:regulation of transcription by RNA polymerase II"/>
    <property type="evidence" value="ECO:0000318"/>
    <property type="project" value="GO_Central"/>
</dbReference>
<dbReference type="CDD" id="cd07765">
    <property type="entry name" value="KRAB_A-box"/>
    <property type="match status" value="1"/>
</dbReference>
<dbReference type="FunFam" id="3.30.160.60:FF:000250">
    <property type="entry name" value="zinc finger protein 197 isoform X1"/>
    <property type="match status" value="1"/>
</dbReference>
<dbReference type="FunFam" id="3.30.160.60:FF:000512">
    <property type="entry name" value="zinc finger protein 197 isoform X1"/>
    <property type="match status" value="1"/>
</dbReference>
<dbReference type="FunFam" id="3.30.160.60:FF:002343">
    <property type="entry name" value="Zinc finger protein 33A"/>
    <property type="match status" value="1"/>
</dbReference>
<dbReference type="FunFam" id="3.30.160.60:FF:000016">
    <property type="entry name" value="zinc finger protein 37 homolog"/>
    <property type="match status" value="1"/>
</dbReference>
<dbReference type="FunFam" id="3.30.160.60:FF:002090">
    <property type="entry name" value="Zinc finger protein 473"/>
    <property type="match status" value="1"/>
</dbReference>
<dbReference type="FunFam" id="3.30.160.60:FF:002254">
    <property type="entry name" value="Zinc finger protein 540"/>
    <property type="match status" value="1"/>
</dbReference>
<dbReference type="FunFam" id="3.30.160.60:FF:000878">
    <property type="entry name" value="Zinc finger protein 544"/>
    <property type="match status" value="1"/>
</dbReference>
<dbReference type="FunFam" id="3.30.160.60:FF:001090">
    <property type="entry name" value="zinc finger protein 629 isoform X2"/>
    <property type="match status" value="1"/>
</dbReference>
<dbReference type="FunFam" id="3.30.160.60:FF:000785">
    <property type="entry name" value="zinc finger protein 648"/>
    <property type="match status" value="1"/>
</dbReference>
<dbReference type="FunFam" id="3.30.160.60:FF:000459">
    <property type="entry name" value="Zinc finger with KRAB and SCAN domains 1"/>
    <property type="match status" value="2"/>
</dbReference>
<dbReference type="FunFam" id="3.30.160.60:FF:000537">
    <property type="entry name" value="Zinc finger with KRAB and SCAN domains 7"/>
    <property type="match status" value="1"/>
</dbReference>
<dbReference type="Gene3D" id="6.10.140.140">
    <property type="match status" value="1"/>
</dbReference>
<dbReference type="Gene3D" id="3.30.160.60">
    <property type="entry name" value="Classic Zinc Finger"/>
    <property type="match status" value="12"/>
</dbReference>
<dbReference type="InterPro" id="IPR001909">
    <property type="entry name" value="KRAB"/>
</dbReference>
<dbReference type="InterPro" id="IPR036051">
    <property type="entry name" value="KRAB_dom_sf"/>
</dbReference>
<dbReference type="InterPro" id="IPR050758">
    <property type="entry name" value="Znf_C2H2-type"/>
</dbReference>
<dbReference type="InterPro" id="IPR036236">
    <property type="entry name" value="Znf_C2H2_sf"/>
</dbReference>
<dbReference type="InterPro" id="IPR013087">
    <property type="entry name" value="Znf_C2H2_type"/>
</dbReference>
<dbReference type="PANTHER" id="PTHR23234:SF8">
    <property type="entry name" value="C2H2-TYPE DOMAIN-CONTAINING PROTEIN"/>
    <property type="match status" value="1"/>
</dbReference>
<dbReference type="PANTHER" id="PTHR23234">
    <property type="entry name" value="ZNF44 PROTEIN"/>
    <property type="match status" value="1"/>
</dbReference>
<dbReference type="Pfam" id="PF01352">
    <property type="entry name" value="KRAB"/>
    <property type="match status" value="1"/>
</dbReference>
<dbReference type="Pfam" id="PF00096">
    <property type="entry name" value="zf-C2H2"/>
    <property type="match status" value="12"/>
</dbReference>
<dbReference type="SMART" id="SM00349">
    <property type="entry name" value="KRAB"/>
    <property type="match status" value="1"/>
</dbReference>
<dbReference type="SMART" id="SM00355">
    <property type="entry name" value="ZnF_C2H2"/>
    <property type="match status" value="12"/>
</dbReference>
<dbReference type="SUPFAM" id="SSF57667">
    <property type="entry name" value="beta-beta-alpha zinc fingers"/>
    <property type="match status" value="7"/>
</dbReference>
<dbReference type="SUPFAM" id="SSF109640">
    <property type="entry name" value="KRAB domain (Kruppel-associated box)"/>
    <property type="match status" value="1"/>
</dbReference>
<dbReference type="PROSITE" id="PS50805">
    <property type="entry name" value="KRAB"/>
    <property type="match status" value="1"/>
</dbReference>
<dbReference type="PROSITE" id="PS00028">
    <property type="entry name" value="ZINC_FINGER_C2H2_1"/>
    <property type="match status" value="12"/>
</dbReference>
<dbReference type="PROSITE" id="PS50157">
    <property type="entry name" value="ZINC_FINGER_C2H2_2"/>
    <property type="match status" value="12"/>
</dbReference>
<protein>
    <recommendedName>
        <fullName>Zinc finger protein 852</fullName>
    </recommendedName>
</protein>
<accession>Q6ZMS4</accession>
<accession>B4DLD7</accession>
<comment type="function">
    <text evidence="1">May be involved in transcriptional regulation.</text>
</comment>
<comment type="subcellular location">
    <subcellularLocation>
        <location evidence="1">Nucleus</location>
    </subcellularLocation>
</comment>
<comment type="similarity">
    <text evidence="4">Belongs to the krueppel C2H2-type zinc-finger protein family.</text>
</comment>
<comment type="sequence caution" evidence="4">
    <conflict type="frameshift">
        <sequence resource="EMBL-CDS" id="BAG59499"/>
    </conflict>
</comment>
<name>ZN852_HUMAN</name>
<keyword id="KW-0479">Metal-binding</keyword>
<keyword id="KW-0539">Nucleus</keyword>
<keyword id="KW-0597">Phosphoprotein</keyword>
<keyword id="KW-1267">Proteomics identification</keyword>
<keyword id="KW-1185">Reference proteome</keyword>
<keyword id="KW-0677">Repeat</keyword>
<keyword id="KW-0862">Zinc</keyword>
<keyword id="KW-0863">Zinc-finger</keyword>
<evidence type="ECO:0000250" key="1"/>
<evidence type="ECO:0000255" key="2">
    <source>
        <dbReference type="PROSITE-ProRule" id="PRU00042"/>
    </source>
</evidence>
<evidence type="ECO:0000255" key="3">
    <source>
        <dbReference type="PROSITE-ProRule" id="PRU00119"/>
    </source>
</evidence>
<evidence type="ECO:0000305" key="4"/>
<evidence type="ECO:0007744" key="5">
    <source>
    </source>
</evidence>
<proteinExistence type="evidence at protein level"/>
<feature type="chain" id="PRO_0000332125" description="Zinc finger protein 852">
    <location>
        <begin position="1"/>
        <end position="543"/>
    </location>
</feature>
<feature type="domain" description="KRAB" evidence="3">
    <location>
        <begin position="8"/>
        <end position="82"/>
    </location>
</feature>
<feature type="zinc finger region" description="C2H2-type 1" evidence="2">
    <location>
        <begin position="159"/>
        <end position="181"/>
    </location>
</feature>
<feature type="zinc finger region" description="C2H2-type 2" evidence="2">
    <location>
        <begin position="187"/>
        <end position="209"/>
    </location>
</feature>
<feature type="zinc finger region" description="C2H2-type 3" evidence="2">
    <location>
        <begin position="215"/>
        <end position="237"/>
    </location>
</feature>
<feature type="zinc finger region" description="C2H2-type 4" evidence="2">
    <location>
        <begin position="243"/>
        <end position="265"/>
    </location>
</feature>
<feature type="zinc finger region" description="C2H2-type 5" evidence="2">
    <location>
        <begin position="271"/>
        <end position="293"/>
    </location>
</feature>
<feature type="zinc finger region" description="C2H2-type 6" evidence="2">
    <location>
        <begin position="299"/>
        <end position="321"/>
    </location>
</feature>
<feature type="zinc finger region" description="C2H2-type 7" evidence="2">
    <location>
        <begin position="327"/>
        <end position="349"/>
    </location>
</feature>
<feature type="zinc finger region" description="C2H2-type 8" evidence="2">
    <location>
        <begin position="355"/>
        <end position="377"/>
    </location>
</feature>
<feature type="zinc finger region" description="C2H2-type 9" evidence="2">
    <location>
        <begin position="383"/>
        <end position="405"/>
    </location>
</feature>
<feature type="zinc finger region" description="C2H2-type 10" evidence="2">
    <location>
        <begin position="411"/>
        <end position="433"/>
    </location>
</feature>
<feature type="zinc finger region" description="C2H2-type 11" evidence="2">
    <location>
        <begin position="439"/>
        <end position="461"/>
    </location>
</feature>
<feature type="zinc finger region" description="C2H2-type 12" evidence="2">
    <location>
        <begin position="467"/>
        <end position="489"/>
    </location>
</feature>
<feature type="modified residue" description="Phosphoserine" evidence="5">
    <location>
        <position position="145"/>
    </location>
</feature>
<feature type="sequence conflict" description="In Ref. 1; BAG59499." evidence="4" ref="1">
    <original>S</original>
    <variation>P</variation>
    <location>
        <position position="158"/>
    </location>
</feature>